<gene>
    <name evidence="1" type="primary">kup</name>
    <name type="ordered locus">MXAN_0341</name>
</gene>
<comment type="function">
    <text evidence="1">Transport of potassium into the cell. Likely operates as a K(+):H(+) symporter.</text>
</comment>
<comment type="catalytic activity">
    <reaction evidence="1">
        <text>K(+)(in) + H(+)(in) = K(+)(out) + H(+)(out)</text>
        <dbReference type="Rhea" id="RHEA:28490"/>
        <dbReference type="ChEBI" id="CHEBI:15378"/>
        <dbReference type="ChEBI" id="CHEBI:29103"/>
    </reaction>
    <physiologicalReaction direction="right-to-left" evidence="1">
        <dbReference type="Rhea" id="RHEA:28492"/>
    </physiologicalReaction>
</comment>
<comment type="subcellular location">
    <subcellularLocation>
        <location evidence="1">Cell inner membrane</location>
        <topology evidence="1">Multi-pass membrane protein</topology>
    </subcellularLocation>
</comment>
<comment type="similarity">
    <text evidence="1">Belongs to the HAK/KUP transporter (TC 2.A.72) family.</text>
</comment>
<proteinExistence type="inferred from homology"/>
<accession>Q1DFF8</accession>
<evidence type="ECO:0000255" key="1">
    <source>
        <dbReference type="HAMAP-Rule" id="MF_01522"/>
    </source>
</evidence>
<reference key="1">
    <citation type="journal article" date="2006" name="Proc. Natl. Acad. Sci. U.S.A.">
        <title>Evolution of sensory complexity recorded in a myxobacterial genome.</title>
        <authorList>
            <person name="Goldman B.S."/>
            <person name="Nierman W.C."/>
            <person name="Kaiser D."/>
            <person name="Slater S.C."/>
            <person name="Durkin A.S."/>
            <person name="Eisen J.A."/>
            <person name="Ronning C.M."/>
            <person name="Barbazuk W.B."/>
            <person name="Blanchard M."/>
            <person name="Field C."/>
            <person name="Halling C."/>
            <person name="Hinkle G."/>
            <person name="Iartchuk O."/>
            <person name="Kim H.S."/>
            <person name="Mackenzie C."/>
            <person name="Madupu R."/>
            <person name="Miller N."/>
            <person name="Shvartsbeyn A."/>
            <person name="Sullivan S.A."/>
            <person name="Vaudin M."/>
            <person name="Wiegand R."/>
            <person name="Kaplan H.B."/>
        </authorList>
    </citation>
    <scope>NUCLEOTIDE SEQUENCE [LARGE SCALE GENOMIC DNA]</scope>
    <source>
        <strain>DK1622</strain>
    </source>
</reference>
<feature type="chain" id="PRO_0000279801" description="Probable potassium transport system protein Kup">
    <location>
        <begin position="1"/>
        <end position="653"/>
    </location>
</feature>
<feature type="transmembrane region" description="Helical" evidence="1">
    <location>
        <begin position="37"/>
        <end position="57"/>
    </location>
</feature>
<feature type="transmembrane region" description="Helical" evidence="1">
    <location>
        <begin position="79"/>
        <end position="99"/>
    </location>
</feature>
<feature type="transmembrane region" description="Helical" evidence="1">
    <location>
        <begin position="134"/>
        <end position="154"/>
    </location>
</feature>
<feature type="transmembrane region" description="Helical" evidence="1">
    <location>
        <begin position="168"/>
        <end position="188"/>
    </location>
</feature>
<feature type="transmembrane region" description="Helical" evidence="1">
    <location>
        <begin position="196"/>
        <end position="216"/>
    </location>
</feature>
<feature type="transmembrane region" description="Helical" evidence="1">
    <location>
        <begin position="243"/>
        <end position="263"/>
    </location>
</feature>
<feature type="transmembrane region" description="Helical" evidence="1">
    <location>
        <begin position="278"/>
        <end position="298"/>
    </location>
</feature>
<feature type="transmembrane region" description="Helical" evidence="1">
    <location>
        <begin position="320"/>
        <end position="340"/>
    </location>
</feature>
<feature type="transmembrane region" description="Helical" evidence="1">
    <location>
        <begin position="368"/>
        <end position="388"/>
    </location>
</feature>
<feature type="transmembrane region" description="Helical" evidence="1">
    <location>
        <begin position="397"/>
        <end position="417"/>
    </location>
</feature>
<feature type="transmembrane region" description="Helical" evidence="1">
    <location>
        <begin position="426"/>
        <end position="446"/>
    </location>
</feature>
<feature type="transmembrane region" description="Helical" evidence="1">
    <location>
        <begin position="450"/>
        <end position="470"/>
    </location>
</feature>
<sequence length="653" mass="70640">MLQARVQLKRGFVKATTTGVPGGEDVKKGPDTFKRSALLALGALGIVYGDIGTSPLYALRECFTGAHGIPPTPANVLGVLSLIFWSLIIVVSVKYLLLVMKADNRGEGGILAMMALVMQRQRAQPSHRSRPMLITLGIFGAALLYGDGIITPAITVLSAVEGLHVATAVFDPYVIPIALVILVALFLVQRHGTADIGAVFGPVMCIWFLTLAGLGVKELVHNPAVLGALSPWHAVELFRHNHLHGFLVLGGVFLVVTGCEALYADMGHFGRKPIQLAWFSMVLPALMLNYLGQGALLLRDASAARNPFFLLAPSWLLYPLVALATVAGVIASQALIAGVFSLTRQAMQLGYSPRMEVVHTSAEEMGQIYLPGLNWALLVGVVALVLGFRSSSALASAYGIAVSTAMVITTLMAYVVARELWGVRRWVAIPVVGLFLSVELAFFGANAVKVADGGWFPLLMAVVVFTLMTTWKRGRDILAAKLRASSIPLKVLLGSFGDHPPVRVPGTAIFMTGNAEGTPPALLHNLKHNKVLHEQVVLLTILSEELPHVPHSERVEVEPLEQGFVRVVARYGFMENPGIPDVLKRCREKGLQFQLMGTSFFLGRETLIPTKRPGMAVWREALFAWMSRNARSATAYFRIPPNRVVELGAQVEL</sequence>
<organism>
    <name type="scientific">Myxococcus xanthus (strain DK1622)</name>
    <dbReference type="NCBI Taxonomy" id="246197"/>
    <lineage>
        <taxon>Bacteria</taxon>
        <taxon>Pseudomonadati</taxon>
        <taxon>Myxococcota</taxon>
        <taxon>Myxococcia</taxon>
        <taxon>Myxococcales</taxon>
        <taxon>Cystobacterineae</taxon>
        <taxon>Myxococcaceae</taxon>
        <taxon>Myxococcus</taxon>
    </lineage>
</organism>
<dbReference type="EMBL" id="CP000113">
    <property type="protein sequence ID" value="ABF87568.1"/>
    <property type="molecule type" value="Genomic_DNA"/>
</dbReference>
<dbReference type="RefSeq" id="WP_011550479.1">
    <property type="nucleotide sequence ID" value="NC_008095.1"/>
</dbReference>
<dbReference type="STRING" id="246197.MXAN_0341"/>
<dbReference type="EnsemblBacteria" id="ABF87568">
    <property type="protein sequence ID" value="ABF87568"/>
    <property type="gene ID" value="MXAN_0341"/>
</dbReference>
<dbReference type="GeneID" id="41357839"/>
<dbReference type="KEGG" id="mxa:MXAN_0341"/>
<dbReference type="eggNOG" id="COG3158">
    <property type="taxonomic scope" value="Bacteria"/>
</dbReference>
<dbReference type="HOGENOM" id="CLU_008142_4_2_7"/>
<dbReference type="OrthoDB" id="9805577at2"/>
<dbReference type="Proteomes" id="UP000002402">
    <property type="component" value="Chromosome"/>
</dbReference>
<dbReference type="GO" id="GO:0005886">
    <property type="term" value="C:plasma membrane"/>
    <property type="evidence" value="ECO:0007669"/>
    <property type="project" value="UniProtKB-SubCell"/>
</dbReference>
<dbReference type="GO" id="GO:0015079">
    <property type="term" value="F:potassium ion transmembrane transporter activity"/>
    <property type="evidence" value="ECO:0007669"/>
    <property type="project" value="UniProtKB-UniRule"/>
</dbReference>
<dbReference type="GO" id="GO:0015293">
    <property type="term" value="F:symporter activity"/>
    <property type="evidence" value="ECO:0007669"/>
    <property type="project" value="UniProtKB-UniRule"/>
</dbReference>
<dbReference type="HAMAP" id="MF_01522">
    <property type="entry name" value="Kup"/>
    <property type="match status" value="1"/>
</dbReference>
<dbReference type="InterPro" id="IPR003855">
    <property type="entry name" value="K+_transporter"/>
</dbReference>
<dbReference type="InterPro" id="IPR053952">
    <property type="entry name" value="K_trans_C"/>
</dbReference>
<dbReference type="InterPro" id="IPR053951">
    <property type="entry name" value="K_trans_N"/>
</dbReference>
<dbReference type="InterPro" id="IPR023051">
    <property type="entry name" value="Kup"/>
</dbReference>
<dbReference type="PANTHER" id="PTHR30540:SF79">
    <property type="entry name" value="LOW AFFINITY POTASSIUM TRANSPORT SYSTEM PROTEIN KUP"/>
    <property type="match status" value="1"/>
</dbReference>
<dbReference type="PANTHER" id="PTHR30540">
    <property type="entry name" value="OSMOTIC STRESS POTASSIUM TRANSPORTER"/>
    <property type="match status" value="1"/>
</dbReference>
<dbReference type="Pfam" id="PF02705">
    <property type="entry name" value="K_trans"/>
    <property type="match status" value="1"/>
</dbReference>
<dbReference type="Pfam" id="PF22776">
    <property type="entry name" value="K_trans_C"/>
    <property type="match status" value="1"/>
</dbReference>
<name>KUP_MYXXD</name>
<keyword id="KW-0997">Cell inner membrane</keyword>
<keyword id="KW-1003">Cell membrane</keyword>
<keyword id="KW-0406">Ion transport</keyword>
<keyword id="KW-0472">Membrane</keyword>
<keyword id="KW-0630">Potassium</keyword>
<keyword id="KW-0633">Potassium transport</keyword>
<keyword id="KW-1185">Reference proteome</keyword>
<keyword id="KW-0769">Symport</keyword>
<keyword id="KW-0812">Transmembrane</keyword>
<keyword id="KW-1133">Transmembrane helix</keyword>
<keyword id="KW-0813">Transport</keyword>
<protein>
    <recommendedName>
        <fullName evidence="1">Probable potassium transport system protein Kup</fullName>
    </recommendedName>
</protein>